<gene>
    <name evidence="1" type="primary">murG</name>
    <name type="ordered locus">PLES_47911</name>
</gene>
<accession>B7UZJ0</accession>
<evidence type="ECO:0000255" key="1">
    <source>
        <dbReference type="HAMAP-Rule" id="MF_00033"/>
    </source>
</evidence>
<organism>
    <name type="scientific">Pseudomonas aeruginosa (strain LESB58)</name>
    <dbReference type="NCBI Taxonomy" id="557722"/>
    <lineage>
        <taxon>Bacteria</taxon>
        <taxon>Pseudomonadati</taxon>
        <taxon>Pseudomonadota</taxon>
        <taxon>Gammaproteobacteria</taxon>
        <taxon>Pseudomonadales</taxon>
        <taxon>Pseudomonadaceae</taxon>
        <taxon>Pseudomonas</taxon>
    </lineage>
</organism>
<comment type="function">
    <text evidence="1">Cell wall formation. Catalyzes the transfer of a GlcNAc subunit on undecaprenyl-pyrophosphoryl-MurNAc-pentapeptide (lipid intermediate I) to form undecaprenyl-pyrophosphoryl-MurNAc-(pentapeptide)GlcNAc (lipid intermediate II).</text>
</comment>
<comment type="catalytic activity">
    <reaction evidence="1">
        <text>di-trans,octa-cis-undecaprenyl diphospho-N-acetyl-alpha-D-muramoyl-L-alanyl-D-glutamyl-meso-2,6-diaminopimeloyl-D-alanyl-D-alanine + UDP-N-acetyl-alpha-D-glucosamine = di-trans,octa-cis-undecaprenyl diphospho-[N-acetyl-alpha-D-glucosaminyl-(1-&gt;4)]-N-acetyl-alpha-D-muramoyl-L-alanyl-D-glutamyl-meso-2,6-diaminopimeloyl-D-alanyl-D-alanine + UDP + H(+)</text>
        <dbReference type="Rhea" id="RHEA:31227"/>
        <dbReference type="ChEBI" id="CHEBI:15378"/>
        <dbReference type="ChEBI" id="CHEBI:57705"/>
        <dbReference type="ChEBI" id="CHEBI:58223"/>
        <dbReference type="ChEBI" id="CHEBI:61387"/>
        <dbReference type="ChEBI" id="CHEBI:61388"/>
        <dbReference type="EC" id="2.4.1.227"/>
    </reaction>
</comment>
<comment type="pathway">
    <text evidence="1">Cell wall biogenesis; peptidoglycan biosynthesis.</text>
</comment>
<comment type="subcellular location">
    <subcellularLocation>
        <location evidence="1">Cell inner membrane</location>
        <topology evidence="1">Peripheral membrane protein</topology>
        <orientation evidence="1">Cytoplasmic side</orientation>
    </subcellularLocation>
</comment>
<comment type="similarity">
    <text evidence="1">Belongs to the glycosyltransferase 28 family. MurG subfamily.</text>
</comment>
<name>MURG_PSEA8</name>
<reference key="1">
    <citation type="journal article" date="2009" name="Genome Res.">
        <title>Newly introduced genomic prophage islands are critical determinants of in vivo competitiveness in the Liverpool epidemic strain of Pseudomonas aeruginosa.</title>
        <authorList>
            <person name="Winstanley C."/>
            <person name="Langille M.G.I."/>
            <person name="Fothergill J.L."/>
            <person name="Kukavica-Ibrulj I."/>
            <person name="Paradis-Bleau C."/>
            <person name="Sanschagrin F."/>
            <person name="Thomson N.R."/>
            <person name="Winsor G.L."/>
            <person name="Quail M.A."/>
            <person name="Lennard N."/>
            <person name="Bignell A."/>
            <person name="Clarke L."/>
            <person name="Seeger K."/>
            <person name="Saunders D."/>
            <person name="Harris D."/>
            <person name="Parkhill J."/>
            <person name="Hancock R.E.W."/>
            <person name="Brinkman F.S.L."/>
            <person name="Levesque R.C."/>
        </authorList>
    </citation>
    <scope>NUCLEOTIDE SEQUENCE [LARGE SCALE GENOMIC DNA]</scope>
    <source>
        <strain>LESB58</strain>
    </source>
</reference>
<dbReference type="EC" id="2.4.1.227" evidence="1"/>
<dbReference type="EMBL" id="FM209186">
    <property type="protein sequence ID" value="CAW29545.1"/>
    <property type="molecule type" value="Genomic_DNA"/>
</dbReference>
<dbReference type="RefSeq" id="WP_003103107.1">
    <property type="nucleotide sequence ID" value="NC_011770.1"/>
</dbReference>
<dbReference type="SMR" id="B7UZJ0"/>
<dbReference type="CAZy" id="GT28">
    <property type="family name" value="Glycosyltransferase Family 28"/>
</dbReference>
<dbReference type="KEGG" id="pag:PLES_47911"/>
<dbReference type="HOGENOM" id="CLU_037404_2_0_6"/>
<dbReference type="UniPathway" id="UPA00219"/>
<dbReference type="GO" id="GO:0005886">
    <property type="term" value="C:plasma membrane"/>
    <property type="evidence" value="ECO:0007669"/>
    <property type="project" value="UniProtKB-SubCell"/>
</dbReference>
<dbReference type="GO" id="GO:0051991">
    <property type="term" value="F:UDP-N-acetyl-D-glucosamine:N-acetylmuramoyl-L-alanyl-D-glutamyl-meso-2,6-diaminopimelyl-D-alanyl-D-alanine-diphosphoundecaprenol 4-beta-N-acetylglucosaminlytransferase activity"/>
    <property type="evidence" value="ECO:0007669"/>
    <property type="project" value="RHEA"/>
</dbReference>
<dbReference type="GO" id="GO:0050511">
    <property type="term" value="F:undecaprenyldiphospho-muramoylpentapeptide beta-N-acetylglucosaminyltransferase activity"/>
    <property type="evidence" value="ECO:0007669"/>
    <property type="project" value="UniProtKB-UniRule"/>
</dbReference>
<dbReference type="GO" id="GO:0005975">
    <property type="term" value="P:carbohydrate metabolic process"/>
    <property type="evidence" value="ECO:0007669"/>
    <property type="project" value="InterPro"/>
</dbReference>
<dbReference type="GO" id="GO:0051301">
    <property type="term" value="P:cell division"/>
    <property type="evidence" value="ECO:0007669"/>
    <property type="project" value="UniProtKB-KW"/>
</dbReference>
<dbReference type="GO" id="GO:0071555">
    <property type="term" value="P:cell wall organization"/>
    <property type="evidence" value="ECO:0007669"/>
    <property type="project" value="UniProtKB-KW"/>
</dbReference>
<dbReference type="GO" id="GO:0030259">
    <property type="term" value="P:lipid glycosylation"/>
    <property type="evidence" value="ECO:0007669"/>
    <property type="project" value="UniProtKB-UniRule"/>
</dbReference>
<dbReference type="GO" id="GO:0009252">
    <property type="term" value="P:peptidoglycan biosynthetic process"/>
    <property type="evidence" value="ECO:0007669"/>
    <property type="project" value="UniProtKB-UniRule"/>
</dbReference>
<dbReference type="GO" id="GO:0008360">
    <property type="term" value="P:regulation of cell shape"/>
    <property type="evidence" value="ECO:0007669"/>
    <property type="project" value="UniProtKB-KW"/>
</dbReference>
<dbReference type="CDD" id="cd03785">
    <property type="entry name" value="GT28_MurG"/>
    <property type="match status" value="1"/>
</dbReference>
<dbReference type="Gene3D" id="3.40.50.2000">
    <property type="entry name" value="Glycogen Phosphorylase B"/>
    <property type="match status" value="2"/>
</dbReference>
<dbReference type="HAMAP" id="MF_00033">
    <property type="entry name" value="MurG"/>
    <property type="match status" value="1"/>
</dbReference>
<dbReference type="InterPro" id="IPR006009">
    <property type="entry name" value="GlcNAc_MurG"/>
</dbReference>
<dbReference type="InterPro" id="IPR007235">
    <property type="entry name" value="Glyco_trans_28_C"/>
</dbReference>
<dbReference type="InterPro" id="IPR004276">
    <property type="entry name" value="GlycoTrans_28_N"/>
</dbReference>
<dbReference type="NCBIfam" id="TIGR01133">
    <property type="entry name" value="murG"/>
    <property type="match status" value="1"/>
</dbReference>
<dbReference type="PANTHER" id="PTHR21015:SF22">
    <property type="entry name" value="GLYCOSYLTRANSFERASE"/>
    <property type="match status" value="1"/>
</dbReference>
<dbReference type="PANTHER" id="PTHR21015">
    <property type="entry name" value="UDP-N-ACETYLGLUCOSAMINE--N-ACETYLMURAMYL-(PENTAPEPTIDE) PYROPHOSPHORYL-UNDECAPRENOL N-ACETYLGLUCOSAMINE TRANSFERASE 1"/>
    <property type="match status" value="1"/>
</dbReference>
<dbReference type="Pfam" id="PF04101">
    <property type="entry name" value="Glyco_tran_28_C"/>
    <property type="match status" value="1"/>
</dbReference>
<dbReference type="Pfam" id="PF03033">
    <property type="entry name" value="Glyco_transf_28"/>
    <property type="match status" value="1"/>
</dbReference>
<dbReference type="SUPFAM" id="SSF53756">
    <property type="entry name" value="UDP-Glycosyltransferase/glycogen phosphorylase"/>
    <property type="match status" value="1"/>
</dbReference>
<sequence length="357" mass="37799">MKGNVLIMAGGTGGHVFPALACAREFQARGYAVHWLGTPRGIENDLVPKAGLPLHLIQVSGLRGKGLKSLVKAPLELLKSLFQALRVIRQLRPVCVLGLGGYVTGPGGLAARLNGVPLVIHEQNAVAGTANRSLAPIARRVCEAFPDTFPASDKRLTTGNPVRGELFLDAHARAPLTGRRVNLLVLGGSLGAEPLNKLLPEALAQVPLEIRPAIRHQAGRQHAEITAERYRTVAVEADVAPFISDMAAAYAWADLVICRAGALTVSELTAAGLPAFLVPLPHAIDDHQTRNAEFLVRSGAGRLLPQKSTGAAELAAQLSEVLMHPETLRSMADQARSLAKPEATRTVVDACLEVARG</sequence>
<keyword id="KW-0131">Cell cycle</keyword>
<keyword id="KW-0132">Cell division</keyword>
<keyword id="KW-0997">Cell inner membrane</keyword>
<keyword id="KW-1003">Cell membrane</keyword>
<keyword id="KW-0133">Cell shape</keyword>
<keyword id="KW-0961">Cell wall biogenesis/degradation</keyword>
<keyword id="KW-0328">Glycosyltransferase</keyword>
<keyword id="KW-0472">Membrane</keyword>
<keyword id="KW-0573">Peptidoglycan synthesis</keyword>
<keyword id="KW-0808">Transferase</keyword>
<proteinExistence type="inferred from homology"/>
<protein>
    <recommendedName>
        <fullName evidence="1">UDP-N-acetylglucosamine--N-acetylmuramyl-(pentapeptide) pyrophosphoryl-undecaprenol N-acetylglucosamine transferase</fullName>
        <ecNumber evidence="1">2.4.1.227</ecNumber>
    </recommendedName>
    <alternativeName>
        <fullName evidence="1">Undecaprenyl-PP-MurNAc-pentapeptide-UDPGlcNAc GlcNAc transferase</fullName>
    </alternativeName>
</protein>
<feature type="chain" id="PRO_1000116481" description="UDP-N-acetylglucosamine--N-acetylmuramyl-(pentapeptide) pyrophosphoryl-undecaprenol N-acetylglucosamine transferase">
    <location>
        <begin position="1"/>
        <end position="357"/>
    </location>
</feature>
<feature type="binding site" evidence="1">
    <location>
        <begin position="12"/>
        <end position="14"/>
    </location>
    <ligand>
        <name>UDP-N-acetyl-alpha-D-glucosamine</name>
        <dbReference type="ChEBI" id="CHEBI:57705"/>
    </ligand>
</feature>
<feature type="binding site" evidence="1">
    <location>
        <position position="124"/>
    </location>
    <ligand>
        <name>UDP-N-acetyl-alpha-D-glucosamine</name>
        <dbReference type="ChEBI" id="CHEBI:57705"/>
    </ligand>
</feature>
<feature type="binding site" evidence="1">
    <location>
        <position position="163"/>
    </location>
    <ligand>
        <name>UDP-N-acetyl-alpha-D-glucosamine</name>
        <dbReference type="ChEBI" id="CHEBI:57705"/>
    </ligand>
</feature>
<feature type="binding site" evidence="1">
    <location>
        <position position="189"/>
    </location>
    <ligand>
        <name>UDP-N-acetyl-alpha-D-glucosamine</name>
        <dbReference type="ChEBI" id="CHEBI:57705"/>
    </ligand>
</feature>
<feature type="binding site" evidence="1">
    <location>
        <position position="243"/>
    </location>
    <ligand>
        <name>UDP-N-acetyl-alpha-D-glucosamine</name>
        <dbReference type="ChEBI" id="CHEBI:57705"/>
    </ligand>
</feature>
<feature type="binding site" evidence="1">
    <location>
        <begin position="262"/>
        <end position="267"/>
    </location>
    <ligand>
        <name>UDP-N-acetyl-alpha-D-glucosamine</name>
        <dbReference type="ChEBI" id="CHEBI:57705"/>
    </ligand>
</feature>
<feature type="binding site" evidence="1">
    <location>
        <position position="288"/>
    </location>
    <ligand>
        <name>UDP-N-acetyl-alpha-D-glucosamine</name>
        <dbReference type="ChEBI" id="CHEBI:57705"/>
    </ligand>
</feature>